<proteinExistence type="inferred from homology"/>
<keyword id="KW-0067">ATP-binding</keyword>
<keyword id="KW-0143">Chaperone</keyword>
<keyword id="KW-0963">Cytoplasm</keyword>
<keyword id="KW-0413">Isomerase</keyword>
<keyword id="KW-0547">Nucleotide-binding</keyword>
<accession>A9VQG8</accession>
<feature type="chain" id="PRO_1000129975" description="Chaperonin GroEL">
    <location>
        <begin position="1"/>
        <end position="544"/>
    </location>
</feature>
<feature type="binding site" evidence="1">
    <location>
        <begin position="29"/>
        <end position="32"/>
    </location>
    <ligand>
        <name>ATP</name>
        <dbReference type="ChEBI" id="CHEBI:30616"/>
    </ligand>
</feature>
<feature type="binding site" evidence="1">
    <location>
        <begin position="86"/>
        <end position="90"/>
    </location>
    <ligand>
        <name>ATP</name>
        <dbReference type="ChEBI" id="CHEBI:30616"/>
    </ligand>
</feature>
<feature type="binding site" evidence="1">
    <location>
        <position position="413"/>
    </location>
    <ligand>
        <name>ATP</name>
        <dbReference type="ChEBI" id="CHEBI:30616"/>
    </ligand>
</feature>
<feature type="binding site" evidence="1">
    <location>
        <begin position="476"/>
        <end position="478"/>
    </location>
    <ligand>
        <name>ATP</name>
        <dbReference type="ChEBI" id="CHEBI:30616"/>
    </ligand>
</feature>
<feature type="binding site" evidence="1">
    <location>
        <position position="492"/>
    </location>
    <ligand>
        <name>ATP</name>
        <dbReference type="ChEBI" id="CHEBI:30616"/>
    </ligand>
</feature>
<sequence length="544" mass="57432">MAKDIKFSEEARRSMLRGVDTLANAVKVTLGPKGRNVVLEKKFGSPLITNDGVTIAKEIELEDAFENMGAKLVAEVASKTNDVAGDGTTTATVLAQAMIREGLKNVTAGANPMGLRKGIEKAVTAAIEELKAISKPIEGKSSIAQVAAISSADEEVGQLIAEAMERVGNDGVITLEESKGFTTELDVVEGMQFDRGYASPYMITDSDKMEAVLDNPYILITDKKISNIQEILPVLEQVVQQGKPLLIIAEDVEGEALATLVVNKLRGTFNVVAVKAPGFGDRRKAMLEDIAILTGGEVITEELGRDLKSATVESLGRAGKIVVTKENTTVVEGIGNSQQIEARIGQIRAQLEETTSEFDREKLQERLAKLAGGVAVIKVGAATETELKERKLRIEDALNSTRAAVEEGIVAGGGTSLMNVYTKVASIVAEGDEATGINIVLRALEEPVRQIAINAGLEGSVVVERLKGEKVGVGFNAATGEWVNMLESGIVDPAKVTRSALQNAASVAAMFLTTEAVVADKPEPNAPAMPDMGGMGMGGMGGMM</sequence>
<gene>
    <name evidence="1" type="primary">groEL</name>
    <name evidence="1" type="synonym">groL</name>
    <name type="ordered locus">BcerKBAB4_0246</name>
</gene>
<reference key="1">
    <citation type="journal article" date="2008" name="Chem. Biol. Interact.">
        <title>Extending the Bacillus cereus group genomics to putative food-borne pathogens of different toxicity.</title>
        <authorList>
            <person name="Lapidus A."/>
            <person name="Goltsman E."/>
            <person name="Auger S."/>
            <person name="Galleron N."/>
            <person name="Segurens B."/>
            <person name="Dossat C."/>
            <person name="Land M.L."/>
            <person name="Broussolle V."/>
            <person name="Brillard J."/>
            <person name="Guinebretiere M.-H."/>
            <person name="Sanchis V."/>
            <person name="Nguen-the C."/>
            <person name="Lereclus D."/>
            <person name="Richardson P."/>
            <person name="Wincker P."/>
            <person name="Weissenbach J."/>
            <person name="Ehrlich S.D."/>
            <person name="Sorokin A."/>
        </authorList>
    </citation>
    <scope>NUCLEOTIDE SEQUENCE [LARGE SCALE GENOMIC DNA]</scope>
    <source>
        <strain>KBAB4</strain>
    </source>
</reference>
<organism>
    <name type="scientific">Bacillus mycoides (strain KBAB4)</name>
    <name type="common">Bacillus weihenstephanensis</name>
    <dbReference type="NCBI Taxonomy" id="315730"/>
    <lineage>
        <taxon>Bacteria</taxon>
        <taxon>Bacillati</taxon>
        <taxon>Bacillota</taxon>
        <taxon>Bacilli</taxon>
        <taxon>Bacillales</taxon>
        <taxon>Bacillaceae</taxon>
        <taxon>Bacillus</taxon>
        <taxon>Bacillus cereus group</taxon>
    </lineage>
</organism>
<comment type="function">
    <text evidence="1">Together with its co-chaperonin GroES, plays an essential role in assisting protein folding. The GroEL-GroES system forms a nano-cage that allows encapsulation of the non-native substrate proteins and provides a physical environment optimized to promote and accelerate protein folding.</text>
</comment>
<comment type="catalytic activity">
    <reaction evidence="1">
        <text>ATP + H2O + a folded polypeptide = ADP + phosphate + an unfolded polypeptide.</text>
        <dbReference type="EC" id="5.6.1.7"/>
    </reaction>
</comment>
<comment type="subunit">
    <text evidence="1">Forms a cylinder of 14 subunits composed of two heptameric rings stacked back-to-back. Interacts with the co-chaperonin GroES.</text>
</comment>
<comment type="subcellular location">
    <subcellularLocation>
        <location evidence="1">Cytoplasm</location>
    </subcellularLocation>
</comment>
<comment type="similarity">
    <text evidence="1">Belongs to the chaperonin (HSP60) family.</text>
</comment>
<protein>
    <recommendedName>
        <fullName evidence="1">Chaperonin GroEL</fullName>
        <ecNumber evidence="1">5.6.1.7</ecNumber>
    </recommendedName>
    <alternativeName>
        <fullName evidence="1">60 kDa chaperonin</fullName>
    </alternativeName>
    <alternativeName>
        <fullName evidence="1">Chaperonin-60</fullName>
        <shortName evidence="1">Cpn60</shortName>
    </alternativeName>
</protein>
<name>CH60_BACMK</name>
<evidence type="ECO:0000255" key="1">
    <source>
        <dbReference type="HAMAP-Rule" id="MF_00600"/>
    </source>
</evidence>
<dbReference type="EC" id="5.6.1.7" evidence="1"/>
<dbReference type="EMBL" id="CP000903">
    <property type="protein sequence ID" value="ABY41514.1"/>
    <property type="molecule type" value="Genomic_DNA"/>
</dbReference>
<dbReference type="RefSeq" id="WP_002029451.1">
    <property type="nucleotide sequence ID" value="NC_010184.1"/>
</dbReference>
<dbReference type="SMR" id="A9VQG8"/>
<dbReference type="GeneID" id="66264650"/>
<dbReference type="KEGG" id="bwe:BcerKBAB4_0246"/>
<dbReference type="eggNOG" id="COG0459">
    <property type="taxonomic scope" value="Bacteria"/>
</dbReference>
<dbReference type="HOGENOM" id="CLU_016503_3_0_9"/>
<dbReference type="Proteomes" id="UP000002154">
    <property type="component" value="Chromosome"/>
</dbReference>
<dbReference type="GO" id="GO:0005737">
    <property type="term" value="C:cytoplasm"/>
    <property type="evidence" value="ECO:0007669"/>
    <property type="project" value="UniProtKB-SubCell"/>
</dbReference>
<dbReference type="GO" id="GO:0005524">
    <property type="term" value="F:ATP binding"/>
    <property type="evidence" value="ECO:0007669"/>
    <property type="project" value="UniProtKB-UniRule"/>
</dbReference>
<dbReference type="GO" id="GO:0140662">
    <property type="term" value="F:ATP-dependent protein folding chaperone"/>
    <property type="evidence" value="ECO:0007669"/>
    <property type="project" value="InterPro"/>
</dbReference>
<dbReference type="GO" id="GO:0016853">
    <property type="term" value="F:isomerase activity"/>
    <property type="evidence" value="ECO:0007669"/>
    <property type="project" value="UniProtKB-KW"/>
</dbReference>
<dbReference type="GO" id="GO:0051082">
    <property type="term" value="F:unfolded protein binding"/>
    <property type="evidence" value="ECO:0007669"/>
    <property type="project" value="UniProtKB-UniRule"/>
</dbReference>
<dbReference type="GO" id="GO:0042026">
    <property type="term" value="P:protein refolding"/>
    <property type="evidence" value="ECO:0007669"/>
    <property type="project" value="UniProtKB-UniRule"/>
</dbReference>
<dbReference type="CDD" id="cd03344">
    <property type="entry name" value="GroEL"/>
    <property type="match status" value="1"/>
</dbReference>
<dbReference type="FunFam" id="1.10.560.10:FF:000001">
    <property type="entry name" value="60 kDa chaperonin"/>
    <property type="match status" value="1"/>
</dbReference>
<dbReference type="FunFam" id="3.50.7.10:FF:000001">
    <property type="entry name" value="60 kDa chaperonin"/>
    <property type="match status" value="1"/>
</dbReference>
<dbReference type="Gene3D" id="3.50.7.10">
    <property type="entry name" value="GroEL"/>
    <property type="match status" value="1"/>
</dbReference>
<dbReference type="Gene3D" id="1.10.560.10">
    <property type="entry name" value="GroEL-like equatorial domain"/>
    <property type="match status" value="1"/>
</dbReference>
<dbReference type="Gene3D" id="3.30.260.10">
    <property type="entry name" value="TCP-1-like chaperonin intermediate domain"/>
    <property type="match status" value="1"/>
</dbReference>
<dbReference type="HAMAP" id="MF_00600">
    <property type="entry name" value="CH60"/>
    <property type="match status" value="1"/>
</dbReference>
<dbReference type="InterPro" id="IPR018370">
    <property type="entry name" value="Chaperonin_Cpn60_CS"/>
</dbReference>
<dbReference type="InterPro" id="IPR001844">
    <property type="entry name" value="Cpn60/GroEL"/>
</dbReference>
<dbReference type="InterPro" id="IPR002423">
    <property type="entry name" value="Cpn60/GroEL/TCP-1"/>
</dbReference>
<dbReference type="InterPro" id="IPR027409">
    <property type="entry name" value="GroEL-like_apical_dom_sf"/>
</dbReference>
<dbReference type="InterPro" id="IPR027413">
    <property type="entry name" value="GROEL-like_equatorial_sf"/>
</dbReference>
<dbReference type="InterPro" id="IPR027410">
    <property type="entry name" value="TCP-1-like_intermed_sf"/>
</dbReference>
<dbReference type="NCBIfam" id="TIGR02348">
    <property type="entry name" value="GroEL"/>
    <property type="match status" value="1"/>
</dbReference>
<dbReference type="NCBIfam" id="NF000592">
    <property type="entry name" value="PRK00013.1"/>
    <property type="match status" value="1"/>
</dbReference>
<dbReference type="NCBIfam" id="NF009487">
    <property type="entry name" value="PRK12849.1"/>
    <property type="match status" value="1"/>
</dbReference>
<dbReference type="NCBIfam" id="NF009488">
    <property type="entry name" value="PRK12850.1"/>
    <property type="match status" value="1"/>
</dbReference>
<dbReference type="NCBIfam" id="NF009489">
    <property type="entry name" value="PRK12851.1"/>
    <property type="match status" value="1"/>
</dbReference>
<dbReference type="PANTHER" id="PTHR45633">
    <property type="entry name" value="60 KDA HEAT SHOCK PROTEIN, MITOCHONDRIAL"/>
    <property type="match status" value="1"/>
</dbReference>
<dbReference type="Pfam" id="PF00118">
    <property type="entry name" value="Cpn60_TCP1"/>
    <property type="match status" value="1"/>
</dbReference>
<dbReference type="PRINTS" id="PR00298">
    <property type="entry name" value="CHAPERONIN60"/>
</dbReference>
<dbReference type="SUPFAM" id="SSF52029">
    <property type="entry name" value="GroEL apical domain-like"/>
    <property type="match status" value="1"/>
</dbReference>
<dbReference type="SUPFAM" id="SSF48592">
    <property type="entry name" value="GroEL equatorial domain-like"/>
    <property type="match status" value="1"/>
</dbReference>
<dbReference type="SUPFAM" id="SSF54849">
    <property type="entry name" value="GroEL-intermediate domain like"/>
    <property type="match status" value="1"/>
</dbReference>
<dbReference type="PROSITE" id="PS00296">
    <property type="entry name" value="CHAPERONINS_CPN60"/>
    <property type="match status" value="1"/>
</dbReference>